<protein>
    <recommendedName>
        <fullName evidence="1">Ribosomal protein uS12 methylthiotransferase RimO</fullName>
        <shortName evidence="1">uS12 MTTase</shortName>
        <shortName evidence="1">uS12 methylthiotransferase</shortName>
        <ecNumber evidence="1">2.8.4.4</ecNumber>
    </recommendedName>
    <alternativeName>
        <fullName evidence="1">Ribosomal protein uS12 (aspartate-C(3))-methylthiotransferase</fullName>
    </alternativeName>
    <alternativeName>
        <fullName evidence="1">Ribosome maturation factor RimO</fullName>
    </alternativeName>
</protein>
<feature type="chain" id="PRO_0000374701" description="Ribosomal protein uS12 methylthiotransferase RimO">
    <location>
        <begin position="1"/>
        <end position="446"/>
    </location>
</feature>
<feature type="domain" description="MTTase N-terminal" evidence="1">
    <location>
        <begin position="10"/>
        <end position="122"/>
    </location>
</feature>
<feature type="domain" description="Radical SAM core" evidence="2">
    <location>
        <begin position="140"/>
        <end position="369"/>
    </location>
</feature>
<feature type="domain" description="TRAM" evidence="1">
    <location>
        <begin position="372"/>
        <end position="446"/>
    </location>
</feature>
<feature type="binding site" evidence="1">
    <location>
        <position position="19"/>
    </location>
    <ligand>
        <name>[4Fe-4S] cluster</name>
        <dbReference type="ChEBI" id="CHEBI:49883"/>
        <label>1</label>
    </ligand>
</feature>
<feature type="binding site" evidence="1">
    <location>
        <position position="53"/>
    </location>
    <ligand>
        <name>[4Fe-4S] cluster</name>
        <dbReference type="ChEBI" id="CHEBI:49883"/>
        <label>1</label>
    </ligand>
</feature>
<feature type="binding site" evidence="1">
    <location>
        <position position="85"/>
    </location>
    <ligand>
        <name>[4Fe-4S] cluster</name>
        <dbReference type="ChEBI" id="CHEBI:49883"/>
        <label>1</label>
    </ligand>
</feature>
<feature type="binding site" evidence="1">
    <location>
        <position position="154"/>
    </location>
    <ligand>
        <name>[4Fe-4S] cluster</name>
        <dbReference type="ChEBI" id="CHEBI:49883"/>
        <label>2</label>
        <note>4Fe-4S-S-AdoMet</note>
    </ligand>
</feature>
<feature type="binding site" evidence="1">
    <location>
        <position position="158"/>
    </location>
    <ligand>
        <name>[4Fe-4S] cluster</name>
        <dbReference type="ChEBI" id="CHEBI:49883"/>
        <label>2</label>
        <note>4Fe-4S-S-AdoMet</note>
    </ligand>
</feature>
<feature type="binding site" evidence="1">
    <location>
        <position position="161"/>
    </location>
    <ligand>
        <name>[4Fe-4S] cluster</name>
        <dbReference type="ChEBI" id="CHEBI:49883"/>
        <label>2</label>
        <note>4Fe-4S-S-AdoMet</note>
    </ligand>
</feature>
<accession>A8ERB7</accession>
<evidence type="ECO:0000255" key="1">
    <source>
        <dbReference type="HAMAP-Rule" id="MF_01865"/>
    </source>
</evidence>
<evidence type="ECO:0000255" key="2">
    <source>
        <dbReference type="PROSITE-ProRule" id="PRU01266"/>
    </source>
</evidence>
<name>RIMO_ALIB4</name>
<gene>
    <name evidence="1" type="primary">rimO</name>
    <name type="ordered locus">Abu_0214</name>
</gene>
<comment type="function">
    <text evidence="1">Catalyzes the methylthiolation of an aspartic acid residue of ribosomal protein uS12.</text>
</comment>
<comment type="catalytic activity">
    <reaction evidence="1">
        <text>L-aspartate(89)-[ribosomal protein uS12]-hydrogen + (sulfur carrier)-SH + AH2 + 2 S-adenosyl-L-methionine = 3-methylsulfanyl-L-aspartate(89)-[ribosomal protein uS12]-hydrogen + (sulfur carrier)-H + 5'-deoxyadenosine + L-methionine + A + S-adenosyl-L-homocysteine + 2 H(+)</text>
        <dbReference type="Rhea" id="RHEA:37087"/>
        <dbReference type="Rhea" id="RHEA-COMP:10460"/>
        <dbReference type="Rhea" id="RHEA-COMP:10461"/>
        <dbReference type="Rhea" id="RHEA-COMP:14737"/>
        <dbReference type="Rhea" id="RHEA-COMP:14739"/>
        <dbReference type="ChEBI" id="CHEBI:13193"/>
        <dbReference type="ChEBI" id="CHEBI:15378"/>
        <dbReference type="ChEBI" id="CHEBI:17319"/>
        <dbReference type="ChEBI" id="CHEBI:17499"/>
        <dbReference type="ChEBI" id="CHEBI:29917"/>
        <dbReference type="ChEBI" id="CHEBI:29961"/>
        <dbReference type="ChEBI" id="CHEBI:57844"/>
        <dbReference type="ChEBI" id="CHEBI:57856"/>
        <dbReference type="ChEBI" id="CHEBI:59789"/>
        <dbReference type="ChEBI" id="CHEBI:64428"/>
        <dbReference type="ChEBI" id="CHEBI:73599"/>
        <dbReference type="EC" id="2.8.4.4"/>
    </reaction>
</comment>
<comment type="cofactor">
    <cofactor evidence="1">
        <name>[4Fe-4S] cluster</name>
        <dbReference type="ChEBI" id="CHEBI:49883"/>
    </cofactor>
    <text evidence="1">Binds 2 [4Fe-4S] clusters. One cluster is coordinated with 3 cysteines and an exchangeable S-adenosyl-L-methionine.</text>
</comment>
<comment type="subcellular location">
    <subcellularLocation>
        <location evidence="1">Cytoplasm</location>
    </subcellularLocation>
</comment>
<comment type="similarity">
    <text evidence="1">Belongs to the methylthiotransferase family. RimO subfamily.</text>
</comment>
<sequence length="446" mass="50319">MKFSTQKPKKTLHMVSLGCTKNLVDSEVMLGRLSDYQLTDDAQNADVIIVNTCGFIDSAKQESINTILSLHEDRKNESVLVMAGCLSERYKEELQKELPEIDVFTGVGDYDRIDELVNEKRSNFTSEVFLASETNERVITGSSYHAYVKLSEGCNQACSFCAIPSFKGKLHSRTLQSLVKEVKALVAKGYVDFSFVSQDSSSFLRDLDIKNGLELLVEEVEKIEGIKTARILYLYPSTTTLSLIDKIADSKVFVNYFDMPLQHITPSMLKIMKRGKGVEQLNELMNHMKSKPNSFVRTTFIAGHPGETEDDFEALCNYVENFKFDRANVFSYSDEEGTTAETRTDKVEQELIDERAEVLGEIISQTTQESLESEVGKTFEVYIDGESEEHEYLLSARKTIWAPSIDGEIYINDNELSEGEQIKFGQIYTVKITELVGDKLLATVIK</sequence>
<reference key="1">
    <citation type="journal article" date="2007" name="PLoS ONE">
        <title>The complete genome sequence and analysis of the Epsilonproteobacterium Arcobacter butzleri.</title>
        <authorList>
            <person name="Miller W.G."/>
            <person name="Parker C.T."/>
            <person name="Rubenfield M."/>
            <person name="Mendz G.L."/>
            <person name="Woesten M.M.S.M."/>
            <person name="Ussery D.W."/>
            <person name="Stolz J.F."/>
            <person name="Binnewies T.T."/>
            <person name="Hallin P.F."/>
            <person name="Wang G."/>
            <person name="Malek J.A."/>
            <person name="Rogosin A."/>
            <person name="Stanker L.H."/>
            <person name="Mandrell R.E."/>
        </authorList>
    </citation>
    <scope>NUCLEOTIDE SEQUENCE [LARGE SCALE GENOMIC DNA]</scope>
    <source>
        <strain>RM4018</strain>
    </source>
</reference>
<dbReference type="EC" id="2.8.4.4" evidence="1"/>
<dbReference type="EMBL" id="CP000361">
    <property type="protein sequence ID" value="ABV66491.1"/>
    <property type="molecule type" value="Genomic_DNA"/>
</dbReference>
<dbReference type="RefSeq" id="WP_012012085.1">
    <property type="nucleotide sequence ID" value="NC_009850.1"/>
</dbReference>
<dbReference type="SMR" id="A8ERB7"/>
<dbReference type="STRING" id="367737.Abu_0214"/>
<dbReference type="GeneID" id="24303601"/>
<dbReference type="KEGG" id="abu:Abu_0214"/>
<dbReference type="eggNOG" id="COG0621">
    <property type="taxonomic scope" value="Bacteria"/>
</dbReference>
<dbReference type="HOGENOM" id="CLU_018697_0_1_7"/>
<dbReference type="Proteomes" id="UP000001136">
    <property type="component" value="Chromosome"/>
</dbReference>
<dbReference type="GO" id="GO:0005829">
    <property type="term" value="C:cytosol"/>
    <property type="evidence" value="ECO:0007669"/>
    <property type="project" value="TreeGrafter"/>
</dbReference>
<dbReference type="GO" id="GO:0051539">
    <property type="term" value="F:4 iron, 4 sulfur cluster binding"/>
    <property type="evidence" value="ECO:0007669"/>
    <property type="project" value="UniProtKB-UniRule"/>
</dbReference>
<dbReference type="GO" id="GO:0035599">
    <property type="term" value="F:aspartic acid methylthiotransferase activity"/>
    <property type="evidence" value="ECO:0007669"/>
    <property type="project" value="TreeGrafter"/>
</dbReference>
<dbReference type="GO" id="GO:0046872">
    <property type="term" value="F:metal ion binding"/>
    <property type="evidence" value="ECO:0007669"/>
    <property type="project" value="UniProtKB-KW"/>
</dbReference>
<dbReference type="GO" id="GO:0103039">
    <property type="term" value="F:protein methylthiotransferase activity"/>
    <property type="evidence" value="ECO:0007669"/>
    <property type="project" value="UniProtKB-EC"/>
</dbReference>
<dbReference type="GO" id="GO:0006400">
    <property type="term" value="P:tRNA modification"/>
    <property type="evidence" value="ECO:0007669"/>
    <property type="project" value="InterPro"/>
</dbReference>
<dbReference type="CDD" id="cd01335">
    <property type="entry name" value="Radical_SAM"/>
    <property type="match status" value="1"/>
</dbReference>
<dbReference type="Gene3D" id="3.40.50.12160">
    <property type="entry name" value="Methylthiotransferase, N-terminal domain"/>
    <property type="match status" value="1"/>
</dbReference>
<dbReference type="Gene3D" id="2.40.50.140">
    <property type="entry name" value="Nucleic acid-binding proteins"/>
    <property type="match status" value="1"/>
</dbReference>
<dbReference type="Gene3D" id="3.80.30.20">
    <property type="entry name" value="tm_1862 like domain"/>
    <property type="match status" value="1"/>
</dbReference>
<dbReference type="HAMAP" id="MF_01865">
    <property type="entry name" value="MTTase_RimO"/>
    <property type="match status" value="1"/>
</dbReference>
<dbReference type="InterPro" id="IPR006638">
    <property type="entry name" value="Elp3/MiaA/NifB-like_rSAM"/>
</dbReference>
<dbReference type="InterPro" id="IPR005839">
    <property type="entry name" value="Methylthiotransferase"/>
</dbReference>
<dbReference type="InterPro" id="IPR020612">
    <property type="entry name" value="Methylthiotransferase_CS"/>
</dbReference>
<dbReference type="InterPro" id="IPR013848">
    <property type="entry name" value="Methylthiotransferase_N"/>
</dbReference>
<dbReference type="InterPro" id="IPR038135">
    <property type="entry name" value="Methylthiotransferase_N_sf"/>
</dbReference>
<dbReference type="InterPro" id="IPR012340">
    <property type="entry name" value="NA-bd_OB-fold"/>
</dbReference>
<dbReference type="InterPro" id="IPR005840">
    <property type="entry name" value="Ribosomal_uS12_MeSTrfase_RimO"/>
</dbReference>
<dbReference type="InterPro" id="IPR007197">
    <property type="entry name" value="rSAM"/>
</dbReference>
<dbReference type="InterPro" id="IPR023404">
    <property type="entry name" value="rSAM_horseshoe"/>
</dbReference>
<dbReference type="InterPro" id="IPR002792">
    <property type="entry name" value="TRAM_dom"/>
</dbReference>
<dbReference type="NCBIfam" id="TIGR01125">
    <property type="entry name" value="30S ribosomal protein S12 methylthiotransferase RimO"/>
    <property type="match status" value="1"/>
</dbReference>
<dbReference type="NCBIfam" id="TIGR00089">
    <property type="entry name" value="MiaB/RimO family radical SAM methylthiotransferase"/>
    <property type="match status" value="1"/>
</dbReference>
<dbReference type="PANTHER" id="PTHR43837">
    <property type="entry name" value="RIBOSOMAL PROTEIN S12 METHYLTHIOTRANSFERASE RIMO"/>
    <property type="match status" value="1"/>
</dbReference>
<dbReference type="PANTHER" id="PTHR43837:SF1">
    <property type="entry name" value="RIBOSOMAL PROTEIN US12 METHYLTHIOTRANSFERASE RIMO"/>
    <property type="match status" value="1"/>
</dbReference>
<dbReference type="Pfam" id="PF04055">
    <property type="entry name" value="Radical_SAM"/>
    <property type="match status" value="1"/>
</dbReference>
<dbReference type="Pfam" id="PF18693">
    <property type="entry name" value="TRAM_2"/>
    <property type="match status" value="1"/>
</dbReference>
<dbReference type="Pfam" id="PF00919">
    <property type="entry name" value="UPF0004"/>
    <property type="match status" value="1"/>
</dbReference>
<dbReference type="SFLD" id="SFLDG01082">
    <property type="entry name" value="B12-binding_domain_containing"/>
    <property type="match status" value="1"/>
</dbReference>
<dbReference type="SFLD" id="SFLDS00029">
    <property type="entry name" value="Radical_SAM"/>
    <property type="match status" value="1"/>
</dbReference>
<dbReference type="SFLD" id="SFLDF00274">
    <property type="entry name" value="ribosomal_protein_S12_methylth"/>
    <property type="match status" value="1"/>
</dbReference>
<dbReference type="SMART" id="SM00729">
    <property type="entry name" value="Elp3"/>
    <property type="match status" value="1"/>
</dbReference>
<dbReference type="SUPFAM" id="SSF102114">
    <property type="entry name" value="Radical SAM enzymes"/>
    <property type="match status" value="1"/>
</dbReference>
<dbReference type="PROSITE" id="PS51449">
    <property type="entry name" value="MTTASE_N"/>
    <property type="match status" value="1"/>
</dbReference>
<dbReference type="PROSITE" id="PS01278">
    <property type="entry name" value="MTTASE_RADICAL"/>
    <property type="match status" value="1"/>
</dbReference>
<dbReference type="PROSITE" id="PS51918">
    <property type="entry name" value="RADICAL_SAM"/>
    <property type="match status" value="1"/>
</dbReference>
<dbReference type="PROSITE" id="PS50926">
    <property type="entry name" value="TRAM"/>
    <property type="match status" value="1"/>
</dbReference>
<keyword id="KW-0004">4Fe-4S</keyword>
<keyword id="KW-0963">Cytoplasm</keyword>
<keyword id="KW-0408">Iron</keyword>
<keyword id="KW-0411">Iron-sulfur</keyword>
<keyword id="KW-0479">Metal-binding</keyword>
<keyword id="KW-1185">Reference proteome</keyword>
<keyword id="KW-0949">S-adenosyl-L-methionine</keyword>
<keyword id="KW-0808">Transferase</keyword>
<proteinExistence type="inferred from homology"/>
<organism>
    <name type="scientific">Aliarcobacter butzleri (strain RM4018)</name>
    <name type="common">Arcobacter butzleri</name>
    <dbReference type="NCBI Taxonomy" id="367737"/>
    <lineage>
        <taxon>Bacteria</taxon>
        <taxon>Pseudomonadati</taxon>
        <taxon>Campylobacterota</taxon>
        <taxon>Epsilonproteobacteria</taxon>
        <taxon>Campylobacterales</taxon>
        <taxon>Arcobacteraceae</taxon>
        <taxon>Aliarcobacter</taxon>
    </lineage>
</organism>